<protein>
    <recommendedName>
        <fullName evidence="2">Large ribosomal subunit protein uL2cz/uL2cy</fullName>
    </recommendedName>
    <alternativeName>
        <fullName evidence="4">50S ribosomal protein L2, chloroplastic</fullName>
    </alternativeName>
</protein>
<proteinExistence type="inferred from homology"/>
<organism>
    <name type="scientific">Aethionema cordifolium</name>
    <name type="common">Lebanon stonecress</name>
    <dbReference type="NCBI Taxonomy" id="434059"/>
    <lineage>
        <taxon>Eukaryota</taxon>
        <taxon>Viridiplantae</taxon>
        <taxon>Streptophyta</taxon>
        <taxon>Embryophyta</taxon>
        <taxon>Tracheophyta</taxon>
        <taxon>Spermatophyta</taxon>
        <taxon>Magnoliopsida</taxon>
        <taxon>eudicotyledons</taxon>
        <taxon>Gunneridae</taxon>
        <taxon>Pentapetalae</taxon>
        <taxon>rosids</taxon>
        <taxon>malvids</taxon>
        <taxon>Brassicales</taxon>
        <taxon>Brassicaceae</taxon>
        <taxon>Aethionemeae</taxon>
        <taxon>Aethionema</taxon>
    </lineage>
</organism>
<dbReference type="EMBL" id="AP009366">
    <property type="protein sequence ID" value="BAF49811.1"/>
    <property type="molecule type" value="Genomic_DNA"/>
</dbReference>
<dbReference type="EMBL" id="AP009366">
    <property type="protein sequence ID" value="BAF49834.1"/>
    <property type="molecule type" value="Genomic_DNA"/>
</dbReference>
<dbReference type="SMR" id="A4QJF6"/>
<dbReference type="GO" id="GO:0009507">
    <property type="term" value="C:chloroplast"/>
    <property type="evidence" value="ECO:0007669"/>
    <property type="project" value="UniProtKB-SubCell"/>
</dbReference>
<dbReference type="GO" id="GO:0005762">
    <property type="term" value="C:mitochondrial large ribosomal subunit"/>
    <property type="evidence" value="ECO:0007669"/>
    <property type="project" value="TreeGrafter"/>
</dbReference>
<dbReference type="GO" id="GO:0019843">
    <property type="term" value="F:rRNA binding"/>
    <property type="evidence" value="ECO:0007669"/>
    <property type="project" value="UniProtKB-UniRule"/>
</dbReference>
<dbReference type="GO" id="GO:0003735">
    <property type="term" value="F:structural constituent of ribosome"/>
    <property type="evidence" value="ECO:0007669"/>
    <property type="project" value="InterPro"/>
</dbReference>
<dbReference type="GO" id="GO:0016740">
    <property type="term" value="F:transferase activity"/>
    <property type="evidence" value="ECO:0007669"/>
    <property type="project" value="InterPro"/>
</dbReference>
<dbReference type="GO" id="GO:0032543">
    <property type="term" value="P:mitochondrial translation"/>
    <property type="evidence" value="ECO:0007669"/>
    <property type="project" value="TreeGrafter"/>
</dbReference>
<dbReference type="FunFam" id="4.10.950.10:FF:000001">
    <property type="entry name" value="50S ribosomal protein L2"/>
    <property type="match status" value="1"/>
</dbReference>
<dbReference type="FunFam" id="2.30.30.30:FF:000008">
    <property type="entry name" value="50S ribosomal protein L2, chloroplastic"/>
    <property type="match status" value="1"/>
</dbReference>
<dbReference type="FunFam" id="2.40.50.140:FF:000029">
    <property type="entry name" value="50S ribosomal protein L2, chloroplastic"/>
    <property type="match status" value="1"/>
</dbReference>
<dbReference type="Gene3D" id="2.30.30.30">
    <property type="match status" value="1"/>
</dbReference>
<dbReference type="Gene3D" id="2.40.50.140">
    <property type="entry name" value="Nucleic acid-binding proteins"/>
    <property type="match status" value="1"/>
</dbReference>
<dbReference type="Gene3D" id="4.10.950.10">
    <property type="entry name" value="Ribosomal protein L2, domain 3"/>
    <property type="match status" value="1"/>
</dbReference>
<dbReference type="HAMAP" id="MF_01320_B">
    <property type="entry name" value="Ribosomal_uL2_B"/>
    <property type="match status" value="1"/>
</dbReference>
<dbReference type="InterPro" id="IPR012340">
    <property type="entry name" value="NA-bd_OB-fold"/>
</dbReference>
<dbReference type="InterPro" id="IPR014722">
    <property type="entry name" value="Rib_uL2_dom2"/>
</dbReference>
<dbReference type="InterPro" id="IPR002171">
    <property type="entry name" value="Ribosomal_uL2"/>
</dbReference>
<dbReference type="InterPro" id="IPR005880">
    <property type="entry name" value="Ribosomal_uL2_bac/org-type"/>
</dbReference>
<dbReference type="InterPro" id="IPR022669">
    <property type="entry name" value="Ribosomal_uL2_C"/>
</dbReference>
<dbReference type="InterPro" id="IPR022671">
    <property type="entry name" value="Ribosomal_uL2_CS"/>
</dbReference>
<dbReference type="InterPro" id="IPR014726">
    <property type="entry name" value="Ribosomal_uL2_dom3"/>
</dbReference>
<dbReference type="InterPro" id="IPR022666">
    <property type="entry name" value="Ribosomal_uL2_RNA-bd_dom"/>
</dbReference>
<dbReference type="InterPro" id="IPR008991">
    <property type="entry name" value="Translation_prot_SH3-like_sf"/>
</dbReference>
<dbReference type="NCBIfam" id="TIGR01171">
    <property type="entry name" value="rplB_bact"/>
    <property type="match status" value="1"/>
</dbReference>
<dbReference type="PANTHER" id="PTHR13691:SF5">
    <property type="entry name" value="LARGE RIBOSOMAL SUBUNIT PROTEIN UL2M"/>
    <property type="match status" value="1"/>
</dbReference>
<dbReference type="PANTHER" id="PTHR13691">
    <property type="entry name" value="RIBOSOMAL PROTEIN L2"/>
    <property type="match status" value="1"/>
</dbReference>
<dbReference type="Pfam" id="PF00181">
    <property type="entry name" value="Ribosomal_L2"/>
    <property type="match status" value="1"/>
</dbReference>
<dbReference type="Pfam" id="PF03947">
    <property type="entry name" value="Ribosomal_L2_C"/>
    <property type="match status" value="1"/>
</dbReference>
<dbReference type="PIRSF" id="PIRSF002158">
    <property type="entry name" value="Ribosomal_L2"/>
    <property type="match status" value="1"/>
</dbReference>
<dbReference type="SMART" id="SM01383">
    <property type="entry name" value="Ribosomal_L2"/>
    <property type="match status" value="1"/>
</dbReference>
<dbReference type="SMART" id="SM01382">
    <property type="entry name" value="Ribosomal_L2_C"/>
    <property type="match status" value="1"/>
</dbReference>
<dbReference type="SUPFAM" id="SSF50249">
    <property type="entry name" value="Nucleic acid-binding proteins"/>
    <property type="match status" value="1"/>
</dbReference>
<dbReference type="SUPFAM" id="SSF50104">
    <property type="entry name" value="Translation proteins SH3-like domain"/>
    <property type="match status" value="1"/>
</dbReference>
<dbReference type="PROSITE" id="PS00467">
    <property type="entry name" value="RIBOSOMAL_L2"/>
    <property type="match status" value="1"/>
</dbReference>
<comment type="subunit">
    <text evidence="1">Part of the 50S ribosomal subunit.</text>
</comment>
<comment type="subcellular location">
    <subcellularLocation>
        <location>Plastid</location>
        <location>Chloroplast</location>
    </subcellularLocation>
</comment>
<comment type="similarity">
    <text evidence="4">Belongs to the universal ribosomal protein uL2 family.</text>
</comment>
<keyword id="KW-0150">Chloroplast</keyword>
<keyword id="KW-0934">Plastid</keyword>
<keyword id="KW-0687">Ribonucleoprotein</keyword>
<keyword id="KW-0689">Ribosomal protein</keyword>
<reference key="1">
    <citation type="submission" date="2007-03" db="EMBL/GenBank/DDBJ databases">
        <title>Sequencing analysis of Aethionema coridifolium chloroplast DNA.</title>
        <authorList>
            <person name="Hosouchi T."/>
            <person name="Tsuruoka H."/>
            <person name="Kotani H."/>
        </authorList>
    </citation>
    <scope>NUCLEOTIDE SEQUENCE [LARGE SCALE GENOMIC DNA]</scope>
</reference>
<gene>
    <name type="primary">rpl2-A</name>
</gene>
<gene>
    <name type="primary">rpl2-B</name>
</gene>
<evidence type="ECO:0000250" key="1"/>
<evidence type="ECO:0000255" key="2">
    <source>
        <dbReference type="HAMAP-Rule" id="MF_01320"/>
    </source>
</evidence>
<evidence type="ECO:0000256" key="3">
    <source>
        <dbReference type="SAM" id="MobiDB-lite"/>
    </source>
</evidence>
<evidence type="ECO:0000305" key="4"/>
<accession>A4QJF6</accession>
<geneLocation type="chloroplast"/>
<feature type="chain" id="PRO_0000310061" description="Large ribosomal subunit protein uL2cz/uL2cy">
    <location>
        <begin position="1"/>
        <end position="274"/>
    </location>
</feature>
<feature type="region of interest" description="Disordered" evidence="3">
    <location>
        <begin position="1"/>
        <end position="25"/>
    </location>
</feature>
<feature type="region of interest" description="Disordered" evidence="3">
    <location>
        <begin position="224"/>
        <end position="274"/>
    </location>
</feature>
<name>RK2_AETCO</name>
<sequence>MAIHLYKTSTPSTRNGAVDSQVKSNPRNNLIYGQHRCGKGRNARGIITARHRGGGHKRLYRKIDFRRNAKDIYGRIVTIEYDPNRNAYICLIHYGDGEKRYILHPRGAIIGDTIVSGTEVPIKMGNALPLTDMPLGTAIHNIEITLGKGGQLARAAGAVAKLIAKEGKSATIKLPSGEVRLISKNCSATVGQVGNVGVNQKSLGRAGSKCWLGKRPVVRGVVMNPVDHPHGGGEGRAPIGRKKPATPWGYPALGRRTRKRKKYSETLILRRRSK</sequence>